<feature type="chain" id="PRO_1000194428" description="Ribonuclease 3">
    <location>
        <begin position="1"/>
        <end position="226"/>
    </location>
</feature>
<feature type="domain" description="RNase III" evidence="1">
    <location>
        <begin position="6"/>
        <end position="128"/>
    </location>
</feature>
<feature type="domain" description="DRBM" evidence="1">
    <location>
        <begin position="155"/>
        <end position="225"/>
    </location>
</feature>
<feature type="active site" evidence="1">
    <location>
        <position position="45"/>
    </location>
</feature>
<feature type="active site" evidence="1">
    <location>
        <position position="117"/>
    </location>
</feature>
<feature type="binding site" evidence="1">
    <location>
        <position position="41"/>
    </location>
    <ligand>
        <name>Mg(2+)</name>
        <dbReference type="ChEBI" id="CHEBI:18420"/>
    </ligand>
</feature>
<feature type="binding site" evidence="1">
    <location>
        <position position="114"/>
    </location>
    <ligand>
        <name>Mg(2+)</name>
        <dbReference type="ChEBI" id="CHEBI:18420"/>
    </ligand>
</feature>
<feature type="binding site" evidence="1">
    <location>
        <position position="117"/>
    </location>
    <ligand>
        <name>Mg(2+)</name>
        <dbReference type="ChEBI" id="CHEBI:18420"/>
    </ligand>
</feature>
<sequence>MNPIVINRLQRKLGYTFNHQELLQQALTHRSASSKHNERLEFLGDSILSYVIANALYHRFPRVDEGDMSRMRATLVRGNTLAELAREFELGECLRLGPGELKSGGFRRESILADTVEALIGGVFLDSDIQTVEKLILNWYQTRLDEISPGDKQKDPKTRLQEYLQGRHLPLPTYLVVQVRGEAHDQEFTIHCQVSGLSEPVVGTGSSRRKAEQAAAEQALKKLELE</sequence>
<name>RNC_ESCF3</name>
<accession>B7LUZ7</accession>
<protein>
    <recommendedName>
        <fullName evidence="1">Ribonuclease 3</fullName>
        <ecNumber evidence="1">3.1.26.3</ecNumber>
    </recommendedName>
    <alternativeName>
        <fullName evidence="1">Ribonuclease III</fullName>
        <shortName evidence="1">RNase III</shortName>
    </alternativeName>
</protein>
<reference key="1">
    <citation type="journal article" date="2009" name="PLoS Genet.">
        <title>Organised genome dynamics in the Escherichia coli species results in highly diverse adaptive paths.</title>
        <authorList>
            <person name="Touchon M."/>
            <person name="Hoede C."/>
            <person name="Tenaillon O."/>
            <person name="Barbe V."/>
            <person name="Baeriswyl S."/>
            <person name="Bidet P."/>
            <person name="Bingen E."/>
            <person name="Bonacorsi S."/>
            <person name="Bouchier C."/>
            <person name="Bouvet O."/>
            <person name="Calteau A."/>
            <person name="Chiapello H."/>
            <person name="Clermont O."/>
            <person name="Cruveiller S."/>
            <person name="Danchin A."/>
            <person name="Diard M."/>
            <person name="Dossat C."/>
            <person name="Karoui M.E."/>
            <person name="Frapy E."/>
            <person name="Garry L."/>
            <person name="Ghigo J.M."/>
            <person name="Gilles A.M."/>
            <person name="Johnson J."/>
            <person name="Le Bouguenec C."/>
            <person name="Lescat M."/>
            <person name="Mangenot S."/>
            <person name="Martinez-Jehanne V."/>
            <person name="Matic I."/>
            <person name="Nassif X."/>
            <person name="Oztas S."/>
            <person name="Petit M.A."/>
            <person name="Pichon C."/>
            <person name="Rouy Z."/>
            <person name="Ruf C.S."/>
            <person name="Schneider D."/>
            <person name="Tourret J."/>
            <person name="Vacherie B."/>
            <person name="Vallenet D."/>
            <person name="Medigue C."/>
            <person name="Rocha E.P.C."/>
            <person name="Denamur E."/>
        </authorList>
    </citation>
    <scope>NUCLEOTIDE SEQUENCE [LARGE SCALE GENOMIC DNA]</scope>
    <source>
        <strain>ATCC 35469 / DSM 13698 / BCRC 15582 / CCUG 18766 / IAM 14443 / JCM 21226 / LMG 7866 / NBRC 102419 / NCTC 12128 / CDC 0568-73</strain>
    </source>
</reference>
<comment type="function">
    <text evidence="1">Digests double-stranded RNA. Involved in the processing of primary rRNA transcript to yield the immediate precursors to the large and small rRNAs (23S and 16S). Processes some mRNAs, and tRNAs when they are encoded in the rRNA operon. Processes pre-crRNA and tracrRNA of type II CRISPR loci if present in the organism.</text>
</comment>
<comment type="catalytic activity">
    <reaction evidence="1">
        <text>Endonucleolytic cleavage to 5'-phosphomonoester.</text>
        <dbReference type="EC" id="3.1.26.3"/>
    </reaction>
</comment>
<comment type="cofactor">
    <cofactor evidence="1">
        <name>Mg(2+)</name>
        <dbReference type="ChEBI" id="CHEBI:18420"/>
    </cofactor>
</comment>
<comment type="subunit">
    <text evidence="1">Homodimer.</text>
</comment>
<comment type="subcellular location">
    <subcellularLocation>
        <location evidence="1">Cytoplasm</location>
    </subcellularLocation>
</comment>
<comment type="similarity">
    <text evidence="1">Belongs to the ribonuclease III family.</text>
</comment>
<evidence type="ECO:0000255" key="1">
    <source>
        <dbReference type="HAMAP-Rule" id="MF_00104"/>
    </source>
</evidence>
<gene>
    <name evidence="1" type="primary">rnc</name>
    <name type="ordered locus">EFER_0507</name>
</gene>
<dbReference type="EC" id="3.1.26.3" evidence="1"/>
<dbReference type="EMBL" id="CU928158">
    <property type="protein sequence ID" value="CAQ88055.1"/>
    <property type="molecule type" value="Genomic_DNA"/>
</dbReference>
<dbReference type="RefSeq" id="WP_001068343.1">
    <property type="nucleotide sequence ID" value="NC_011740.1"/>
</dbReference>
<dbReference type="SMR" id="B7LUZ7"/>
<dbReference type="GeneID" id="93774524"/>
<dbReference type="KEGG" id="efe:EFER_0507"/>
<dbReference type="HOGENOM" id="CLU_000907_1_1_6"/>
<dbReference type="OrthoDB" id="9805026at2"/>
<dbReference type="Proteomes" id="UP000000745">
    <property type="component" value="Chromosome"/>
</dbReference>
<dbReference type="GO" id="GO:0005737">
    <property type="term" value="C:cytoplasm"/>
    <property type="evidence" value="ECO:0007669"/>
    <property type="project" value="UniProtKB-SubCell"/>
</dbReference>
<dbReference type="GO" id="GO:0003725">
    <property type="term" value="F:double-stranded RNA binding"/>
    <property type="evidence" value="ECO:0007669"/>
    <property type="project" value="TreeGrafter"/>
</dbReference>
<dbReference type="GO" id="GO:0046872">
    <property type="term" value="F:metal ion binding"/>
    <property type="evidence" value="ECO:0007669"/>
    <property type="project" value="UniProtKB-KW"/>
</dbReference>
<dbReference type="GO" id="GO:0004525">
    <property type="term" value="F:ribonuclease III activity"/>
    <property type="evidence" value="ECO:0007669"/>
    <property type="project" value="UniProtKB-UniRule"/>
</dbReference>
<dbReference type="GO" id="GO:0019843">
    <property type="term" value="F:rRNA binding"/>
    <property type="evidence" value="ECO:0007669"/>
    <property type="project" value="UniProtKB-KW"/>
</dbReference>
<dbReference type="GO" id="GO:0006397">
    <property type="term" value="P:mRNA processing"/>
    <property type="evidence" value="ECO:0007669"/>
    <property type="project" value="UniProtKB-UniRule"/>
</dbReference>
<dbReference type="GO" id="GO:0010468">
    <property type="term" value="P:regulation of gene expression"/>
    <property type="evidence" value="ECO:0007669"/>
    <property type="project" value="TreeGrafter"/>
</dbReference>
<dbReference type="GO" id="GO:0006364">
    <property type="term" value="P:rRNA processing"/>
    <property type="evidence" value="ECO:0007669"/>
    <property type="project" value="UniProtKB-UniRule"/>
</dbReference>
<dbReference type="GO" id="GO:0008033">
    <property type="term" value="P:tRNA processing"/>
    <property type="evidence" value="ECO:0007669"/>
    <property type="project" value="UniProtKB-KW"/>
</dbReference>
<dbReference type="CDD" id="cd10845">
    <property type="entry name" value="DSRM_RNAse_III_family"/>
    <property type="match status" value="1"/>
</dbReference>
<dbReference type="CDD" id="cd00593">
    <property type="entry name" value="RIBOc"/>
    <property type="match status" value="1"/>
</dbReference>
<dbReference type="FunFam" id="1.10.1520.10:FF:000001">
    <property type="entry name" value="Ribonuclease 3"/>
    <property type="match status" value="1"/>
</dbReference>
<dbReference type="FunFam" id="3.30.160.20:FF:000003">
    <property type="entry name" value="Ribonuclease 3"/>
    <property type="match status" value="1"/>
</dbReference>
<dbReference type="Gene3D" id="3.30.160.20">
    <property type="match status" value="1"/>
</dbReference>
<dbReference type="Gene3D" id="1.10.1520.10">
    <property type="entry name" value="Ribonuclease III domain"/>
    <property type="match status" value="1"/>
</dbReference>
<dbReference type="HAMAP" id="MF_00104">
    <property type="entry name" value="RNase_III"/>
    <property type="match status" value="1"/>
</dbReference>
<dbReference type="InterPro" id="IPR014720">
    <property type="entry name" value="dsRBD_dom"/>
</dbReference>
<dbReference type="InterPro" id="IPR011907">
    <property type="entry name" value="RNase_III"/>
</dbReference>
<dbReference type="InterPro" id="IPR000999">
    <property type="entry name" value="RNase_III_dom"/>
</dbReference>
<dbReference type="InterPro" id="IPR036389">
    <property type="entry name" value="RNase_III_sf"/>
</dbReference>
<dbReference type="NCBIfam" id="TIGR02191">
    <property type="entry name" value="RNaseIII"/>
    <property type="match status" value="1"/>
</dbReference>
<dbReference type="PANTHER" id="PTHR11207:SF0">
    <property type="entry name" value="RIBONUCLEASE 3"/>
    <property type="match status" value="1"/>
</dbReference>
<dbReference type="PANTHER" id="PTHR11207">
    <property type="entry name" value="RIBONUCLEASE III"/>
    <property type="match status" value="1"/>
</dbReference>
<dbReference type="Pfam" id="PF00035">
    <property type="entry name" value="dsrm"/>
    <property type="match status" value="1"/>
</dbReference>
<dbReference type="Pfam" id="PF14622">
    <property type="entry name" value="Ribonucleas_3_3"/>
    <property type="match status" value="1"/>
</dbReference>
<dbReference type="SMART" id="SM00358">
    <property type="entry name" value="DSRM"/>
    <property type="match status" value="1"/>
</dbReference>
<dbReference type="SMART" id="SM00535">
    <property type="entry name" value="RIBOc"/>
    <property type="match status" value="1"/>
</dbReference>
<dbReference type="SUPFAM" id="SSF54768">
    <property type="entry name" value="dsRNA-binding domain-like"/>
    <property type="match status" value="1"/>
</dbReference>
<dbReference type="SUPFAM" id="SSF69065">
    <property type="entry name" value="RNase III domain-like"/>
    <property type="match status" value="1"/>
</dbReference>
<dbReference type="PROSITE" id="PS50137">
    <property type="entry name" value="DS_RBD"/>
    <property type="match status" value="1"/>
</dbReference>
<dbReference type="PROSITE" id="PS00517">
    <property type="entry name" value="RNASE_3_1"/>
    <property type="match status" value="1"/>
</dbReference>
<dbReference type="PROSITE" id="PS50142">
    <property type="entry name" value="RNASE_3_2"/>
    <property type="match status" value="1"/>
</dbReference>
<proteinExistence type="inferred from homology"/>
<organism>
    <name type="scientific">Escherichia fergusonii (strain ATCC 35469 / DSM 13698 / CCUG 18766 / IAM 14443 / JCM 21226 / LMG 7866 / NBRC 102419 / NCTC 12128 / CDC 0568-73)</name>
    <dbReference type="NCBI Taxonomy" id="585054"/>
    <lineage>
        <taxon>Bacteria</taxon>
        <taxon>Pseudomonadati</taxon>
        <taxon>Pseudomonadota</taxon>
        <taxon>Gammaproteobacteria</taxon>
        <taxon>Enterobacterales</taxon>
        <taxon>Enterobacteriaceae</taxon>
        <taxon>Escherichia</taxon>
    </lineage>
</organism>
<keyword id="KW-0963">Cytoplasm</keyword>
<keyword id="KW-0255">Endonuclease</keyword>
<keyword id="KW-0378">Hydrolase</keyword>
<keyword id="KW-0460">Magnesium</keyword>
<keyword id="KW-0479">Metal-binding</keyword>
<keyword id="KW-0507">mRNA processing</keyword>
<keyword id="KW-0540">Nuclease</keyword>
<keyword id="KW-0694">RNA-binding</keyword>
<keyword id="KW-0698">rRNA processing</keyword>
<keyword id="KW-0699">rRNA-binding</keyword>
<keyword id="KW-0819">tRNA processing</keyword>